<evidence type="ECO:0000250" key="1"/>
<evidence type="ECO:0000255" key="2"/>
<evidence type="ECO:0000305" key="3"/>
<sequence length="249" mass="27688">MIYTSSKSLQYLAVPIYTIFKNLTIILIAYGEVLFFGGKVTSMELTSFIMMVLSSVVATWGDQQAIAIKASSLEDLDQELVESTIFVLNPGYLWMFTNCISSALFVLIMRKRIRLTNFKDYDTMFYNNVLALPLLLVFSFIMEDWSTKNLSVNLSADSLAAMVISGLMSVGISYCSGWCVRVTSSTTYSMVGALNKLPIALAGLVFFDAPKNFLSFFSIFLGFLSGLLYAVAKQKKIQQQKVLAATLEK</sequence>
<reference key="1">
    <citation type="journal article" date="1997" name="Nature">
        <title>The nucleotide sequence of Saccharomyces cerevisiae chromosome V.</title>
        <authorList>
            <person name="Dietrich F.S."/>
            <person name="Mulligan J.T."/>
            <person name="Hennessy K.M."/>
            <person name="Yelton M.A."/>
            <person name="Allen E."/>
            <person name="Araujo R."/>
            <person name="Aviles E."/>
            <person name="Berno A."/>
            <person name="Brennan T."/>
            <person name="Carpenter J."/>
            <person name="Chen E."/>
            <person name="Cherry J.M."/>
            <person name="Chung E."/>
            <person name="Duncan M."/>
            <person name="Guzman E."/>
            <person name="Hartzell G."/>
            <person name="Hunicke-Smith S."/>
            <person name="Hyman R.W."/>
            <person name="Kayser A."/>
            <person name="Komp C."/>
            <person name="Lashkari D."/>
            <person name="Lew H."/>
            <person name="Lin D."/>
            <person name="Mosedale D."/>
            <person name="Nakahara K."/>
            <person name="Namath A."/>
            <person name="Norgren R."/>
            <person name="Oefner P."/>
            <person name="Oh C."/>
            <person name="Petel F.X."/>
            <person name="Roberts D."/>
            <person name="Sehl P."/>
            <person name="Schramm S."/>
            <person name="Shogren T."/>
            <person name="Smith V."/>
            <person name="Taylor P."/>
            <person name="Wei Y."/>
            <person name="Botstein D."/>
            <person name="Davis R.W."/>
        </authorList>
    </citation>
    <scope>NUCLEOTIDE SEQUENCE [LARGE SCALE GENOMIC DNA]</scope>
    <source>
        <strain>ATCC 204508 / S288c</strain>
    </source>
</reference>
<reference key="2">
    <citation type="journal article" date="2014" name="G3 (Bethesda)">
        <title>The reference genome sequence of Saccharomyces cerevisiae: Then and now.</title>
        <authorList>
            <person name="Engel S.R."/>
            <person name="Dietrich F.S."/>
            <person name="Fisk D.G."/>
            <person name="Binkley G."/>
            <person name="Balakrishnan R."/>
            <person name="Costanzo M.C."/>
            <person name="Dwight S.S."/>
            <person name="Hitz B.C."/>
            <person name="Karra K."/>
            <person name="Nash R.S."/>
            <person name="Weng S."/>
            <person name="Wong E.D."/>
            <person name="Lloyd P."/>
            <person name="Skrzypek M.S."/>
            <person name="Miyasato S.R."/>
            <person name="Simison M."/>
            <person name="Cherry J.M."/>
        </authorList>
    </citation>
    <scope>GENOME REANNOTATION</scope>
    <source>
        <strain>ATCC 204508 / S288c</strain>
    </source>
</reference>
<reference key="3">
    <citation type="journal article" date="2007" name="Genome Res.">
        <title>Approaching a complete repository of sequence-verified protein-encoding clones for Saccharomyces cerevisiae.</title>
        <authorList>
            <person name="Hu Y."/>
            <person name="Rolfs A."/>
            <person name="Bhullar B."/>
            <person name="Murthy T.V.S."/>
            <person name="Zhu C."/>
            <person name="Berger M.F."/>
            <person name="Camargo A.A."/>
            <person name="Kelley F."/>
            <person name="McCarron S."/>
            <person name="Jepson D."/>
            <person name="Richardson A."/>
            <person name="Raphael J."/>
            <person name="Moreira D."/>
            <person name="Taycher E."/>
            <person name="Zuo D."/>
            <person name="Mohr S."/>
            <person name="Kane M.F."/>
            <person name="Williamson J."/>
            <person name="Simpson A.J.G."/>
            <person name="Bulyk M.L."/>
            <person name="Harlow E."/>
            <person name="Marsischky G."/>
            <person name="Kolodner R.D."/>
            <person name="LaBaer J."/>
        </authorList>
    </citation>
    <scope>NUCLEOTIDE SEQUENCE [GENOMIC DNA]</scope>
    <source>
        <strain>ATCC 204508 / S288c</strain>
    </source>
</reference>
<reference key="4">
    <citation type="journal article" date="1997" name="J. Biol. Chem.">
        <title>The VRG4 gene is required for GDP-mannose transport into the lumen of the Golgi in the yeast, Saccharomyces cerevisiae.</title>
        <authorList>
            <person name="Dean N."/>
            <person name="Zhang Y.B."/>
            <person name="Poster J.B."/>
        </authorList>
    </citation>
    <scope>GENE NAME</scope>
</reference>
<dbReference type="EMBL" id="U18796">
    <property type="protein sequence ID" value="AAB64574.1"/>
    <property type="molecule type" value="Genomic_DNA"/>
</dbReference>
<dbReference type="EMBL" id="AY558452">
    <property type="protein sequence ID" value="AAS56778.1"/>
    <property type="molecule type" value="Genomic_DNA"/>
</dbReference>
<dbReference type="EMBL" id="BK006939">
    <property type="protein sequence ID" value="DAA07692.1"/>
    <property type="molecule type" value="Genomic_DNA"/>
</dbReference>
<dbReference type="PIR" id="S50542">
    <property type="entry name" value="S50542"/>
</dbReference>
<dbReference type="RefSeq" id="NP_010956.1">
    <property type="nucleotide sequence ID" value="NM_001178930.1"/>
</dbReference>
<dbReference type="SMR" id="P0CE11"/>
<dbReference type="BioGRID" id="36774">
    <property type="interactions" value="52"/>
</dbReference>
<dbReference type="FunCoup" id="P0CE11">
    <property type="interactions" value="334"/>
</dbReference>
<dbReference type="STRING" id="4932.YER039C"/>
<dbReference type="GlyCosmos" id="P0CE11">
    <property type="glycosylation" value="2 sites, No reported glycans"/>
</dbReference>
<dbReference type="GlyGen" id="P0CE11">
    <property type="glycosylation" value="2 sites"/>
</dbReference>
<dbReference type="PaxDb" id="4932-YER039C"/>
<dbReference type="PeptideAtlas" id="P0CE11"/>
<dbReference type="EnsemblFungi" id="YER039C_mRNA">
    <property type="protein sequence ID" value="YER039C"/>
    <property type="gene ID" value="YER039C"/>
</dbReference>
<dbReference type="GeneID" id="856761"/>
<dbReference type="KEGG" id="sce:YER039C"/>
<dbReference type="AGR" id="SGD:S000000841"/>
<dbReference type="SGD" id="S000000841">
    <property type="gene designation" value="HVG1"/>
</dbReference>
<dbReference type="VEuPathDB" id="FungiDB:YER039C"/>
<dbReference type="eggNOG" id="KOG1444">
    <property type="taxonomic scope" value="Eukaryota"/>
</dbReference>
<dbReference type="GeneTree" id="ENSGT00510000048348"/>
<dbReference type="HOGENOM" id="CLU_025360_1_1_1"/>
<dbReference type="InParanoid" id="P0CE11"/>
<dbReference type="OMA" id="KLIRVWI"/>
<dbReference type="OrthoDB" id="417037at2759"/>
<dbReference type="BioCyc" id="YEAST:G3O-30220-MONOMER"/>
<dbReference type="BioGRID-ORCS" id="856761">
    <property type="hits" value="7 hits in 10 CRISPR screens"/>
</dbReference>
<dbReference type="PRO" id="PR:P0CE11"/>
<dbReference type="Proteomes" id="UP000002311">
    <property type="component" value="Chromosome V"/>
</dbReference>
<dbReference type="RNAct" id="P0CE11">
    <property type="molecule type" value="protein"/>
</dbReference>
<dbReference type="GO" id="GO:0030659">
    <property type="term" value="C:cytoplasmic vesicle membrane"/>
    <property type="evidence" value="ECO:0007669"/>
    <property type="project" value="UniProtKB-SubCell"/>
</dbReference>
<dbReference type="GO" id="GO:0005783">
    <property type="term" value="C:endoplasmic reticulum"/>
    <property type="evidence" value="ECO:0007005"/>
    <property type="project" value="SGD"/>
</dbReference>
<dbReference type="GO" id="GO:0005789">
    <property type="term" value="C:endoplasmic reticulum membrane"/>
    <property type="evidence" value="ECO:0007669"/>
    <property type="project" value="UniProtKB-SubCell"/>
</dbReference>
<dbReference type="GO" id="GO:0005794">
    <property type="term" value="C:Golgi apparatus"/>
    <property type="evidence" value="ECO:0000318"/>
    <property type="project" value="GO_Central"/>
</dbReference>
<dbReference type="GO" id="GO:0000139">
    <property type="term" value="C:Golgi membrane"/>
    <property type="evidence" value="ECO:0007669"/>
    <property type="project" value="UniProtKB-SubCell"/>
</dbReference>
<dbReference type="GO" id="GO:0015297">
    <property type="term" value="F:antiporter activity"/>
    <property type="evidence" value="ECO:0000318"/>
    <property type="project" value="GO_Central"/>
</dbReference>
<dbReference type="GO" id="GO:0005458">
    <property type="term" value="F:GDP-mannose transmembrane transporter activity"/>
    <property type="evidence" value="ECO:0000318"/>
    <property type="project" value="GO_Central"/>
</dbReference>
<dbReference type="GO" id="GO:1990570">
    <property type="term" value="P:GDP-mannose transmembrane transport"/>
    <property type="evidence" value="ECO:0000318"/>
    <property type="project" value="GO_Central"/>
</dbReference>
<dbReference type="InterPro" id="IPR013657">
    <property type="entry name" value="SCL35B1-4/HUT1"/>
</dbReference>
<dbReference type="InterPro" id="IPR050186">
    <property type="entry name" value="TPT_transporter"/>
</dbReference>
<dbReference type="NCBIfam" id="TIGR00803">
    <property type="entry name" value="nst"/>
    <property type="match status" value="1"/>
</dbReference>
<dbReference type="PANTHER" id="PTHR11132">
    <property type="entry name" value="SOLUTE CARRIER FAMILY 35"/>
    <property type="match status" value="1"/>
</dbReference>
<dbReference type="Pfam" id="PF08449">
    <property type="entry name" value="UAA"/>
    <property type="match status" value="1"/>
</dbReference>
<dbReference type="SUPFAM" id="SSF103481">
    <property type="entry name" value="Multidrug resistance efflux transporter EmrE"/>
    <property type="match status" value="1"/>
</dbReference>
<feature type="chain" id="PRO_0000202628" description="Probable GDP-mannose transporter 2">
    <location>
        <begin position="1"/>
        <end position="249"/>
    </location>
</feature>
<feature type="topological domain" description="Lumenal" evidence="2">
    <location>
        <begin position="1"/>
        <end position="15"/>
    </location>
</feature>
<feature type="transmembrane region" description="Helical" evidence="2">
    <location>
        <begin position="16"/>
        <end position="36"/>
    </location>
</feature>
<feature type="topological domain" description="Cytoplasmic" evidence="2">
    <location>
        <begin position="37"/>
        <end position="47"/>
    </location>
</feature>
<feature type="transmembrane region" description="Helical" evidence="2">
    <location>
        <begin position="48"/>
        <end position="68"/>
    </location>
</feature>
<feature type="topological domain" description="Lumenal" evidence="2">
    <location>
        <begin position="69"/>
        <end position="84"/>
    </location>
</feature>
<feature type="transmembrane region" description="Helical" evidence="2">
    <location>
        <begin position="85"/>
        <end position="105"/>
    </location>
</feature>
<feature type="topological domain" description="Cytoplasmic" evidence="2">
    <location>
        <begin position="106"/>
        <end position="122"/>
    </location>
</feature>
<feature type="transmembrane region" description="Helical" evidence="2">
    <location>
        <begin position="123"/>
        <end position="143"/>
    </location>
</feature>
<feature type="topological domain" description="Lumenal" evidence="2">
    <location>
        <begin position="144"/>
        <end position="159"/>
    </location>
</feature>
<feature type="transmembrane region" description="Helical" evidence="2">
    <location>
        <begin position="160"/>
        <end position="180"/>
    </location>
</feature>
<feature type="topological domain" description="Cytoplasmic" evidence="2">
    <location>
        <begin position="181"/>
        <end position="186"/>
    </location>
</feature>
<feature type="transmembrane region" description="Helical" evidence="2">
    <location>
        <begin position="187"/>
        <end position="207"/>
    </location>
</feature>
<feature type="topological domain" description="Lumenal" evidence="2">
    <location>
        <begin position="208"/>
        <end position="211"/>
    </location>
</feature>
<feature type="transmembrane region" description="Helical" evidence="2">
    <location>
        <begin position="212"/>
        <end position="232"/>
    </location>
</feature>
<feature type="topological domain" description="Cytoplasmic" evidence="2">
    <location>
        <begin position="233"/>
        <end position="249"/>
    </location>
</feature>
<feature type="glycosylation site" description="N-linked (GlcNAc...) asparagine" evidence="2">
    <location>
        <position position="149"/>
    </location>
</feature>
<feature type="glycosylation site" description="N-linked (GlcNAc...) asparagine" evidence="2">
    <location>
        <position position="153"/>
    </location>
</feature>
<name>GMT2_YEAST</name>
<accession>P0CE11</accession>
<accession>D3DLT8</accession>
<accession>P40027</accession>
<accession>Q3E844</accession>
<keyword id="KW-0968">Cytoplasmic vesicle</keyword>
<keyword id="KW-0256">Endoplasmic reticulum</keyword>
<keyword id="KW-0325">Glycoprotein</keyword>
<keyword id="KW-0333">Golgi apparatus</keyword>
<keyword id="KW-0472">Membrane</keyword>
<keyword id="KW-1185">Reference proteome</keyword>
<keyword id="KW-0762">Sugar transport</keyword>
<keyword id="KW-0812">Transmembrane</keyword>
<keyword id="KW-1133">Transmembrane helix</keyword>
<keyword id="KW-0813">Transport</keyword>
<proteinExistence type="inferred from homology"/>
<organism>
    <name type="scientific">Saccharomyces cerevisiae (strain ATCC 204508 / S288c)</name>
    <name type="common">Baker's yeast</name>
    <dbReference type="NCBI Taxonomy" id="559292"/>
    <lineage>
        <taxon>Eukaryota</taxon>
        <taxon>Fungi</taxon>
        <taxon>Dikarya</taxon>
        <taxon>Ascomycota</taxon>
        <taxon>Saccharomycotina</taxon>
        <taxon>Saccharomycetes</taxon>
        <taxon>Saccharomycetales</taxon>
        <taxon>Saccharomycetaceae</taxon>
        <taxon>Saccharomyces</taxon>
    </lineage>
</organism>
<gene>
    <name type="primary">HVG1</name>
    <name type="synonym">YEM9</name>
    <name type="ordered locus">YER039C</name>
</gene>
<protein>
    <recommendedName>
        <fullName>Probable GDP-mannose transporter 2</fullName>
        <shortName>GMT 2</shortName>
    </recommendedName>
</protein>
<comment type="function">
    <text evidence="1">Involved in the import of GDP-mannose from the cytoplasm into the Golgi lumen.</text>
</comment>
<comment type="subcellular location">
    <subcellularLocation>
        <location evidence="1">Golgi apparatus membrane</location>
        <topology evidence="1">Multi-pass membrane protein</topology>
    </subcellularLocation>
    <subcellularLocation>
        <location evidence="1">Cytoplasmic vesicle membrane</location>
        <topology evidence="1">Multi-pass membrane protein</topology>
    </subcellularLocation>
    <subcellularLocation>
        <location evidence="1">Endoplasmic reticulum membrane</location>
        <topology evidence="1">Multi-pass membrane protein</topology>
    </subcellularLocation>
    <text evidence="1">Recycles between the Golgi apparatus and the endoplasmic reticulum.</text>
</comment>
<comment type="similarity">
    <text evidence="3">Belongs to the TPT transporter family. SLC35D subfamily.</text>
</comment>
<comment type="caution">
    <text evidence="3">This is a truncated version of GDP-mannose transporter 2. Strain S288c has a stop codon in position 73, which disrupts the gene coding for this protein and produces two ORFs YER039C-A and YER039C. A contiguous sequence for GDP-mannose transporter 2 can be found in strain Lalvin EC1118 (AC C8Z742).</text>
</comment>